<keyword id="KW-0002">3D-structure</keyword>
<keyword id="KW-0106">Calcium</keyword>
<keyword id="KW-0326">Glycosidase</keyword>
<keyword id="KW-0378">Hydrolase</keyword>
<keyword id="KW-0479">Metal-binding</keyword>
<keyword id="KW-1185">Reference proteome</keyword>
<keyword id="KW-0732">Signal</keyword>
<accession>P42592</accession>
<accession>Q2M9C6</accession>
<sequence>MKIKTILTPVTCALLISFSAHAANADNYKNVINRTGAPQYMKDYDYDDHQRFNPFFDLGAWHGHLLPDGPNTMGGFPGVALLTEEYINFMASNFDRLTVWQDGKKVDFTLEAYSIPGALVQKLTAKDVQVEMTLRFATPRTSLLETKITSNKPLDLVWDGELLEKLEAKEGKPLSDKTIAGEYPDYQRKISATRDGLKVTFGKVRATWDLLTSGESEYQVHKSLPVQTEINGNRFTSKAHINGSTTLYTTYSHLLTAQEVSKEQMQIRDILARPAFYLTASQQRWEEYLKKGLTNPDATPEQTRVAVKAIETLNGNWRSPGGAVKFNTVTPSVTGRWFSGNQTWPWDTWKQAFAMAHFNPDIAKENIRAVFSWQIQPGDSVRPQDVGFVPDLIAWNLSPERGGDGGNWNERNTKPSLAAWSVMEVYNVTQDKTWVAEMYPKLVAYHDWWLRNRDHNGNGVPEYGATRDKAHNTESGEMLFTVKKGDKEETQSGLNNYARVVEKGQYDSLEIPAQVAASWESGRDDAAVFGFIDKEQLDKYVANGGKRSDWTVKFAENRSQDGTLLGYSLLQESVDQASYMYSDNHYLAEMATILGKPEEAKRYRQLAQQLADYINTCMFDPTTQFYYDVRIEDKPLANGCAGKPIVERGKGPEGWSPLFNGAATQANADAVVKVMLDPKEFNTFVPLGTAALTNPAFGADIYWRGRVWVDQFWFGLKGMERYGYRDDALKLADTFFRHAKGLTADGPIQENYNPLTGAQQGAPNFSWSAAHLYMLYNDFFRKQ</sequence>
<proteinExistence type="evidence at protein level"/>
<dbReference type="EC" id="3.2.1.-"/>
<dbReference type="EMBL" id="U18997">
    <property type="protein sequence ID" value="AAA57881.1"/>
    <property type="molecule type" value="Genomic_DNA"/>
</dbReference>
<dbReference type="EMBL" id="U00096">
    <property type="protein sequence ID" value="AAC76115.1"/>
    <property type="molecule type" value="Genomic_DNA"/>
</dbReference>
<dbReference type="EMBL" id="AP009048">
    <property type="protein sequence ID" value="BAE77130.1"/>
    <property type="molecule type" value="Genomic_DNA"/>
</dbReference>
<dbReference type="PIR" id="E65096">
    <property type="entry name" value="E65096"/>
</dbReference>
<dbReference type="RefSeq" id="NP_417551.1">
    <property type="nucleotide sequence ID" value="NC_000913.3"/>
</dbReference>
<dbReference type="RefSeq" id="WP_000695487.1">
    <property type="nucleotide sequence ID" value="NZ_LN832404.1"/>
</dbReference>
<dbReference type="PDB" id="3D3I">
    <property type="method" value="X-ray"/>
    <property type="resolution" value="1.78 A"/>
    <property type="chains" value="A/B=23-783"/>
</dbReference>
<dbReference type="PDB" id="3W7S">
    <property type="method" value="X-ray"/>
    <property type="resolution" value="1.90 A"/>
    <property type="chains" value="A/B=24-783"/>
</dbReference>
<dbReference type="PDB" id="3W7T">
    <property type="method" value="X-ray"/>
    <property type="resolution" value="1.50 A"/>
    <property type="chains" value="A/B=24-783"/>
</dbReference>
<dbReference type="PDB" id="3W7U">
    <property type="method" value="X-ray"/>
    <property type="resolution" value="1.99 A"/>
    <property type="chains" value="A/B=24-783"/>
</dbReference>
<dbReference type="PDB" id="3W7W">
    <property type="method" value="X-ray"/>
    <property type="resolution" value="2.00 A"/>
    <property type="chains" value="A/B=24-783"/>
</dbReference>
<dbReference type="PDB" id="3W7X">
    <property type="method" value="X-ray"/>
    <property type="resolution" value="2.70 A"/>
    <property type="chains" value="A/B=24-783"/>
</dbReference>
<dbReference type="PDB" id="5CA3">
    <property type="method" value="X-ray"/>
    <property type="resolution" value="1.80 A"/>
    <property type="chains" value="A/B=24-783"/>
</dbReference>
<dbReference type="PDB" id="5GW7">
    <property type="method" value="X-ray"/>
    <property type="resolution" value="2.20 A"/>
    <property type="chains" value="A/B=24-783"/>
</dbReference>
<dbReference type="PDB" id="6XUX">
    <property type="method" value="X-ray"/>
    <property type="resolution" value="1.90 A"/>
    <property type="chains" value="A=5-487"/>
</dbReference>
<dbReference type="PDB" id="7PQQ">
    <property type="method" value="EM"/>
    <property type="resolution" value="3.30 A"/>
    <property type="chains" value="B=22-498"/>
</dbReference>
<dbReference type="PDB" id="7Q1U">
    <property type="method" value="EM"/>
    <property type="resolution" value="2.70 A"/>
    <property type="chains" value="B=22-484"/>
</dbReference>
<dbReference type="PDB" id="7Q6Z">
    <property type="method" value="EM"/>
    <property type="resolution" value="3.59 A"/>
    <property type="chains" value="B=22-484"/>
</dbReference>
<dbReference type="PDB" id="8AFE">
    <property type="method" value="EM"/>
    <property type="resolution" value="3.30 A"/>
    <property type="chains" value="C/D/I/J=433-484"/>
</dbReference>
<dbReference type="PDB" id="8AFH">
    <property type="method" value="EM"/>
    <property type="resolution" value="3.90 A"/>
    <property type="chains" value="C/D/I/J/M/N/S/T=433-484"/>
</dbReference>
<dbReference type="PDB" id="8AFL">
    <property type="method" value="EM"/>
    <property type="resolution" value="4.40 A"/>
    <property type="chains" value="C/D=433-484"/>
</dbReference>
<dbReference type="PDB" id="8AFM">
    <property type="method" value="EM"/>
    <property type="resolution" value="4.80 A"/>
    <property type="chains" value="C/D/I/J=433-484"/>
</dbReference>
<dbReference type="PDB" id="8AHL">
    <property type="method" value="EM"/>
    <property type="resolution" value="4.10 A"/>
    <property type="chains" value="E/F/K/L=433-484"/>
</dbReference>
<dbReference type="PDB" id="8AIA">
    <property type="method" value="EM"/>
    <property type="resolution" value="5.10 A"/>
    <property type="chains" value="C/D/I/J=433-484"/>
</dbReference>
<dbReference type="PDB" id="8AIX">
    <property type="method" value="EM"/>
    <property type="resolution" value="5.80 A"/>
    <property type="chains" value="C/D/I/J/O/P/S/T=22-484"/>
</dbReference>
<dbReference type="PDBsum" id="3D3I"/>
<dbReference type="PDBsum" id="3W7S"/>
<dbReference type="PDBsum" id="3W7T"/>
<dbReference type="PDBsum" id="3W7U"/>
<dbReference type="PDBsum" id="3W7W"/>
<dbReference type="PDBsum" id="3W7X"/>
<dbReference type="PDBsum" id="5CA3"/>
<dbReference type="PDBsum" id="5GW7"/>
<dbReference type="PDBsum" id="6XUX"/>
<dbReference type="PDBsum" id="7PQQ"/>
<dbReference type="PDBsum" id="7Q1U"/>
<dbReference type="PDBsum" id="7Q6Z"/>
<dbReference type="PDBsum" id="8AFE"/>
<dbReference type="PDBsum" id="8AFH"/>
<dbReference type="PDBsum" id="8AFL"/>
<dbReference type="PDBsum" id="8AFM"/>
<dbReference type="PDBsum" id="8AHL"/>
<dbReference type="PDBsum" id="8AIA"/>
<dbReference type="PDBsum" id="8AIX"/>
<dbReference type="EMDB" id="EMD-13596"/>
<dbReference type="SMR" id="P42592"/>
<dbReference type="BioGRID" id="4259266">
    <property type="interactions" value="18"/>
</dbReference>
<dbReference type="ComplexPortal" id="CPX-2947">
    <property type="entry name" value="YgjK glucosidase complex"/>
</dbReference>
<dbReference type="FunCoup" id="P42592">
    <property type="interactions" value="193"/>
</dbReference>
<dbReference type="IntAct" id="P42592">
    <property type="interactions" value="5"/>
</dbReference>
<dbReference type="MINT" id="P42592"/>
<dbReference type="STRING" id="511145.b3080"/>
<dbReference type="CAZy" id="GH63">
    <property type="family name" value="Glycoside Hydrolase Family 63"/>
</dbReference>
<dbReference type="PaxDb" id="511145-b3080"/>
<dbReference type="EnsemblBacteria" id="AAC76115">
    <property type="protein sequence ID" value="AAC76115"/>
    <property type="gene ID" value="b3080"/>
</dbReference>
<dbReference type="GeneID" id="947596"/>
<dbReference type="KEGG" id="ecj:JW3051"/>
<dbReference type="KEGG" id="eco:b3080"/>
<dbReference type="KEGG" id="ecoc:C3026_16820"/>
<dbReference type="PATRIC" id="fig|1411691.4.peg.3650"/>
<dbReference type="EchoBASE" id="EB2581"/>
<dbReference type="eggNOG" id="COG1626">
    <property type="taxonomic scope" value="Bacteria"/>
</dbReference>
<dbReference type="eggNOG" id="COG3408">
    <property type="taxonomic scope" value="Bacteria"/>
</dbReference>
<dbReference type="HOGENOM" id="CLU_015270_0_1_6"/>
<dbReference type="InParanoid" id="P42592"/>
<dbReference type="OMA" id="MAHFNPE"/>
<dbReference type="OrthoDB" id="9781878at2"/>
<dbReference type="PhylomeDB" id="P42592"/>
<dbReference type="BioCyc" id="EcoCyc:G7599-MONOMER"/>
<dbReference type="BioCyc" id="MetaCyc:G7599-MONOMER"/>
<dbReference type="EvolutionaryTrace" id="P42592"/>
<dbReference type="PRO" id="PR:P42592"/>
<dbReference type="Proteomes" id="UP000000625">
    <property type="component" value="Chromosome"/>
</dbReference>
<dbReference type="GO" id="GO:1902687">
    <property type="term" value="C:glucosidase complex"/>
    <property type="evidence" value="ECO:0000353"/>
    <property type="project" value="ComplexPortal"/>
</dbReference>
<dbReference type="GO" id="GO:0004555">
    <property type="term" value="F:alpha,alpha-trehalase activity"/>
    <property type="evidence" value="ECO:0000318"/>
    <property type="project" value="GO_Central"/>
</dbReference>
<dbReference type="GO" id="GO:0015926">
    <property type="term" value="F:glucosidase activity"/>
    <property type="evidence" value="ECO:0000314"/>
    <property type="project" value="EcoCyc"/>
</dbReference>
<dbReference type="GO" id="GO:0046872">
    <property type="term" value="F:metal ion binding"/>
    <property type="evidence" value="ECO:0007669"/>
    <property type="project" value="UniProtKB-KW"/>
</dbReference>
<dbReference type="GO" id="GO:0006974">
    <property type="term" value="P:DNA damage response"/>
    <property type="evidence" value="ECO:0000270"/>
    <property type="project" value="EcoliWiki"/>
</dbReference>
<dbReference type="GO" id="GO:0009313">
    <property type="term" value="P:oligosaccharide catabolic process"/>
    <property type="evidence" value="ECO:0000314"/>
    <property type="project" value="ComplexPortal"/>
</dbReference>
<dbReference type="GO" id="GO:0005993">
    <property type="term" value="P:trehalose catabolic process"/>
    <property type="evidence" value="ECO:0000318"/>
    <property type="project" value="GO_Central"/>
</dbReference>
<dbReference type="FunFam" id="2.70.98.50:FF:000001">
    <property type="entry name" value="Glucosidase YgjK"/>
    <property type="match status" value="1"/>
</dbReference>
<dbReference type="Gene3D" id="1.10.287.100">
    <property type="match status" value="1"/>
</dbReference>
<dbReference type="Gene3D" id="1.50.10.10">
    <property type="match status" value="1"/>
</dbReference>
<dbReference type="Gene3D" id="2.70.98.50">
    <property type="entry name" value="putative glycoside hydrolase family protein from bacillus halodurans"/>
    <property type="match status" value="1"/>
</dbReference>
<dbReference type="Gene3D" id="3.30.1390.40">
    <property type="entry name" value="Ribosomal protein L30p/L7e"/>
    <property type="match status" value="1"/>
</dbReference>
<dbReference type="InterPro" id="IPR008928">
    <property type="entry name" value="6-hairpin_glycosidase_sf"/>
</dbReference>
<dbReference type="InterPro" id="IPR012341">
    <property type="entry name" value="6hp_glycosidase-like_sf"/>
</dbReference>
<dbReference type="InterPro" id="IPR001661">
    <property type="entry name" value="Glyco_hydro_37"/>
</dbReference>
<dbReference type="InterPro" id="IPR054491">
    <property type="entry name" value="MGH1-like_GH"/>
</dbReference>
<dbReference type="InterPro" id="IPR048450">
    <property type="entry name" value="YgjK_N"/>
</dbReference>
<dbReference type="NCBIfam" id="NF007525">
    <property type="entry name" value="PRK10137.1"/>
    <property type="match status" value="1"/>
</dbReference>
<dbReference type="PANTHER" id="PTHR23403">
    <property type="entry name" value="TREHALASE"/>
    <property type="match status" value="1"/>
</dbReference>
<dbReference type="PANTHER" id="PTHR23403:SF1">
    <property type="entry name" value="TREHALASE"/>
    <property type="match status" value="1"/>
</dbReference>
<dbReference type="Pfam" id="PF22422">
    <property type="entry name" value="MGH1-like_GH"/>
    <property type="match status" value="1"/>
</dbReference>
<dbReference type="Pfam" id="PF21152">
    <property type="entry name" value="YgjK_N"/>
    <property type="match status" value="1"/>
</dbReference>
<dbReference type="SUPFAM" id="SSF48208">
    <property type="entry name" value="Six-hairpin glycosidases"/>
    <property type="match status" value="1"/>
</dbReference>
<protein>
    <recommendedName>
        <fullName>Glucosidase YgjK</fullName>
        <ecNumber>3.2.1.-</ecNumber>
    </recommendedName>
</protein>
<reference key="1">
    <citation type="journal article" date="1997" name="Science">
        <title>The complete genome sequence of Escherichia coli K-12.</title>
        <authorList>
            <person name="Blattner F.R."/>
            <person name="Plunkett G. III"/>
            <person name="Bloch C.A."/>
            <person name="Perna N.T."/>
            <person name="Burland V."/>
            <person name="Riley M."/>
            <person name="Collado-Vides J."/>
            <person name="Glasner J.D."/>
            <person name="Rode C.K."/>
            <person name="Mayhew G.F."/>
            <person name="Gregor J."/>
            <person name="Davis N.W."/>
            <person name="Kirkpatrick H.A."/>
            <person name="Goeden M.A."/>
            <person name="Rose D.J."/>
            <person name="Mau B."/>
            <person name="Shao Y."/>
        </authorList>
    </citation>
    <scope>NUCLEOTIDE SEQUENCE [LARGE SCALE GENOMIC DNA]</scope>
    <source>
        <strain>K12 / MG1655 / ATCC 47076</strain>
    </source>
</reference>
<reference key="2">
    <citation type="journal article" date="2006" name="Mol. Syst. Biol.">
        <title>Highly accurate genome sequences of Escherichia coli K-12 strains MG1655 and W3110.</title>
        <authorList>
            <person name="Hayashi K."/>
            <person name="Morooka N."/>
            <person name="Yamamoto Y."/>
            <person name="Fujita K."/>
            <person name="Isono K."/>
            <person name="Choi S."/>
            <person name="Ohtsubo E."/>
            <person name="Baba T."/>
            <person name="Wanner B.L."/>
            <person name="Mori H."/>
            <person name="Horiuchi T."/>
        </authorList>
    </citation>
    <scope>NUCLEOTIDE SEQUENCE [LARGE SCALE GENOMIC DNA]</scope>
    <source>
        <strain>K12 / W3110 / ATCC 27325 / DSM 5911</strain>
    </source>
</reference>
<reference key="3">
    <citation type="journal article" date="2008" name="J. Mol. Biol.">
        <title>Structural insights into the substrate specificity and function of Escherichia coli K12 YgjK, a glucosidase belonging to the glycoside hydrolase family 63.</title>
        <authorList>
            <person name="Kurakata Y."/>
            <person name="Uechi A."/>
            <person name="Yoshida H."/>
            <person name="Kamitori S."/>
            <person name="Sakano Y."/>
            <person name="Nishikawa A."/>
            <person name="Tonozuka T."/>
        </authorList>
    </citation>
    <scope>X-RAY CRYSTALLOGRAPHY (1.50 ANGSTROMS) OF 24-783 IN COMPLEXES WITH CALCIUM; GLUCOSE; MANNOSE AND GALACTOSE</scope>
    <scope>FUNCTION</scope>
    <scope>DOMAIN</scope>
    <source>
        <strain>K12</strain>
    </source>
</reference>
<evidence type="ECO:0000250" key="1"/>
<evidence type="ECO:0000255" key="2"/>
<evidence type="ECO:0000269" key="3">
    <source>
    </source>
</evidence>
<evidence type="ECO:0000305" key="4"/>
<evidence type="ECO:0007829" key="5">
    <source>
        <dbReference type="PDB" id="3D3I"/>
    </source>
</evidence>
<evidence type="ECO:0007829" key="6">
    <source>
        <dbReference type="PDB" id="3W7T"/>
    </source>
</evidence>
<evidence type="ECO:0007829" key="7">
    <source>
        <dbReference type="PDB" id="3W7W"/>
    </source>
</evidence>
<evidence type="ECO:0007829" key="8">
    <source>
        <dbReference type="PDB" id="3W7X"/>
    </source>
</evidence>
<evidence type="ECO:0007829" key="9">
    <source>
        <dbReference type="PDB" id="5GW7"/>
    </source>
</evidence>
<evidence type="ECO:0007829" key="10">
    <source>
        <dbReference type="PDB" id="7Q1U"/>
    </source>
</evidence>
<comment type="function">
    <text evidence="3">Glucoside hydrolase that cleaves the alpha-1,3-glucosidic linkage in nigerose. Has very low activity towards maltooligosaccharides, soluble starch, nigerotriose, kojibiose and trehalose.</text>
</comment>
<comment type="similarity">
    <text evidence="4">Belongs to the glycosyl hydrolase 63 family.</text>
</comment>
<feature type="signal peptide" evidence="2">
    <location>
        <begin position="1"/>
        <end position="22"/>
    </location>
</feature>
<feature type="chain" id="PRO_0000013906" description="Glucosidase YgjK">
    <location>
        <begin position="23"/>
        <end position="783"/>
    </location>
</feature>
<feature type="region of interest" description="N-terminal domain">
    <location>
        <begin position="24"/>
        <end position="254"/>
    </location>
</feature>
<feature type="region of interest" description="Linker">
    <location>
        <begin position="254"/>
        <end position="299"/>
    </location>
</feature>
<feature type="region of interest" description="A domain">
    <location>
        <begin position="300"/>
        <end position="783"/>
    </location>
</feature>
<feature type="active site" description="Proton donor" evidence="1">
    <location>
        <position position="524"/>
    </location>
</feature>
<feature type="active site" description="Proton acceptor" evidence="1">
    <location>
        <position position="750"/>
    </location>
</feature>
<feature type="binding site">
    <location>
        <position position="454"/>
    </location>
    <ligand>
        <name>Ca(2+)</name>
        <dbReference type="ChEBI" id="CHEBI:29108"/>
    </ligand>
</feature>
<feature type="binding site">
    <location>
        <position position="456"/>
    </location>
    <ligand>
        <name>Ca(2+)</name>
        <dbReference type="ChEBI" id="CHEBI:29108"/>
    </ligand>
</feature>
<feature type="binding site">
    <location>
        <position position="458"/>
    </location>
    <ligand>
        <name>Ca(2+)</name>
        <dbReference type="ChEBI" id="CHEBI:29108"/>
    </ligand>
</feature>
<feature type="binding site">
    <location>
        <position position="460"/>
    </location>
    <ligand>
        <name>Ca(2+)</name>
        <dbReference type="ChEBI" id="CHEBI:29108"/>
    </ligand>
</feature>
<feature type="binding site">
    <location>
        <position position="462"/>
    </location>
    <ligand>
        <name>Ca(2+)</name>
        <dbReference type="ChEBI" id="CHEBI:29108"/>
    </ligand>
</feature>
<feature type="binding site">
    <location>
        <position position="572"/>
    </location>
    <ligand>
        <name>Ca(2+)</name>
        <dbReference type="ChEBI" id="CHEBI:29108"/>
    </ligand>
</feature>
<feature type="helix" evidence="6">
    <location>
        <begin position="25"/>
        <end position="27"/>
    </location>
</feature>
<feature type="strand" evidence="10">
    <location>
        <begin position="30"/>
        <end position="32"/>
    </location>
</feature>
<feature type="strand" evidence="6">
    <location>
        <begin position="40"/>
        <end position="44"/>
    </location>
</feature>
<feature type="strand" evidence="6">
    <location>
        <begin position="48"/>
        <end position="52"/>
    </location>
</feature>
<feature type="strand" evidence="6">
    <location>
        <begin position="61"/>
        <end position="64"/>
    </location>
</feature>
<feature type="turn" evidence="6">
    <location>
        <begin position="70"/>
        <end position="74"/>
    </location>
</feature>
<feature type="strand" evidence="6">
    <location>
        <begin position="79"/>
        <end position="82"/>
    </location>
</feature>
<feature type="strand" evidence="6">
    <location>
        <begin position="84"/>
        <end position="101"/>
    </location>
</feature>
<feature type="strand" evidence="6">
    <location>
        <begin position="109"/>
        <end position="115"/>
    </location>
</feature>
<feature type="strand" evidence="6">
    <location>
        <begin position="118"/>
        <end position="124"/>
    </location>
</feature>
<feature type="strand" evidence="6">
    <location>
        <begin position="126"/>
        <end position="138"/>
    </location>
</feature>
<feature type="strand" evidence="6">
    <location>
        <begin position="141"/>
        <end position="152"/>
    </location>
</feature>
<feature type="strand" evidence="6">
    <location>
        <begin position="154"/>
        <end position="162"/>
    </location>
</feature>
<feature type="strand" evidence="6">
    <location>
        <begin position="165"/>
        <end position="169"/>
    </location>
</feature>
<feature type="strand" evidence="6">
    <location>
        <begin position="172"/>
        <end position="174"/>
    </location>
</feature>
<feature type="helix" evidence="6">
    <location>
        <begin position="179"/>
        <end position="182"/>
    </location>
</feature>
<feature type="turn" evidence="5">
    <location>
        <begin position="184"/>
        <end position="186"/>
    </location>
</feature>
<feature type="strand" evidence="6">
    <location>
        <begin position="189"/>
        <end position="193"/>
    </location>
</feature>
<feature type="strand" evidence="6">
    <location>
        <begin position="196"/>
        <end position="200"/>
    </location>
</feature>
<feature type="strand" evidence="8">
    <location>
        <begin position="204"/>
        <end position="206"/>
    </location>
</feature>
<feature type="turn" evidence="6">
    <location>
        <begin position="207"/>
        <end position="209"/>
    </location>
</feature>
<feature type="strand" evidence="8">
    <location>
        <begin position="210"/>
        <end position="212"/>
    </location>
</feature>
<feature type="strand" evidence="6">
    <location>
        <begin position="217"/>
        <end position="224"/>
    </location>
</feature>
<feature type="strand" evidence="6">
    <location>
        <begin position="227"/>
        <end position="231"/>
    </location>
</feature>
<feature type="strand" evidence="6">
    <location>
        <begin position="234"/>
        <end position="241"/>
    </location>
</feature>
<feature type="strand" evidence="6">
    <location>
        <begin position="243"/>
        <end position="254"/>
    </location>
</feature>
<feature type="helix" evidence="6">
    <location>
        <begin position="257"/>
        <end position="272"/>
    </location>
</feature>
<feature type="helix" evidence="6">
    <location>
        <begin position="274"/>
        <end position="292"/>
    </location>
</feature>
<feature type="helix" evidence="6">
    <location>
        <begin position="300"/>
        <end position="315"/>
    </location>
</feature>
<feature type="strand" evidence="7">
    <location>
        <begin position="316"/>
        <end position="318"/>
    </location>
</feature>
<feature type="turn" evidence="6">
    <location>
        <begin position="336"/>
        <end position="338"/>
    </location>
</feature>
<feature type="helix" evidence="6">
    <location>
        <begin position="345"/>
        <end position="355"/>
    </location>
</feature>
<feature type="turn" evidence="6">
    <location>
        <begin position="356"/>
        <end position="358"/>
    </location>
</feature>
<feature type="helix" evidence="6">
    <location>
        <begin position="360"/>
        <end position="371"/>
    </location>
</feature>
<feature type="helix" evidence="6">
    <location>
        <begin position="383"/>
        <end position="385"/>
    </location>
</feature>
<feature type="strand" evidence="6">
    <location>
        <begin position="391"/>
        <end position="393"/>
    </location>
</feature>
<feature type="helix" evidence="6">
    <location>
        <begin position="399"/>
        <end position="401"/>
    </location>
</feature>
<feature type="helix" evidence="6">
    <location>
        <begin position="418"/>
        <end position="429"/>
    </location>
</feature>
<feature type="helix" evidence="6">
    <location>
        <begin position="432"/>
        <end position="452"/>
    </location>
</feature>
<feature type="strand" evidence="9">
    <location>
        <begin position="457"/>
        <end position="459"/>
    </location>
</feature>
<feature type="strand" evidence="6">
    <location>
        <begin position="464"/>
        <end position="466"/>
    </location>
</feature>
<feature type="turn" evidence="6">
    <location>
        <begin position="469"/>
        <end position="471"/>
    </location>
</feature>
<feature type="strand" evidence="6">
    <location>
        <begin position="478"/>
        <end position="484"/>
    </location>
</feature>
<feature type="strand" evidence="6">
    <location>
        <begin position="487"/>
        <end position="492"/>
    </location>
</feature>
<feature type="helix" evidence="6">
    <location>
        <begin position="494"/>
        <end position="503"/>
    </location>
</feature>
<feature type="strand" evidence="6">
    <location>
        <begin position="507"/>
        <end position="510"/>
    </location>
</feature>
<feature type="helix" evidence="6">
    <location>
        <begin position="512"/>
        <end position="521"/>
    </location>
</feature>
<feature type="helix" evidence="6">
    <location>
        <begin position="527"/>
        <end position="529"/>
    </location>
</feature>
<feature type="helix" evidence="6">
    <location>
        <begin position="534"/>
        <end position="542"/>
    </location>
</feature>
<feature type="helix" evidence="6">
    <location>
        <begin position="547"/>
        <end position="550"/>
    </location>
</feature>
<feature type="strand" evidence="6">
    <location>
        <begin position="554"/>
        <end position="558"/>
    </location>
</feature>
<feature type="strand" evidence="6">
    <location>
        <begin position="564"/>
        <end position="572"/>
    </location>
</feature>
<feature type="helix" evidence="6">
    <location>
        <begin position="574"/>
        <end position="593"/>
    </location>
</feature>
<feature type="helix" evidence="6">
    <location>
        <begin position="597"/>
        <end position="617"/>
    </location>
</feature>
<feature type="turn" evidence="6">
    <location>
        <begin position="621"/>
        <end position="624"/>
    </location>
</feature>
<feature type="helix" evidence="6">
    <location>
        <begin position="646"/>
        <end position="648"/>
    </location>
</feature>
<feature type="helix" evidence="6">
    <location>
        <begin position="652"/>
        <end position="655"/>
    </location>
</feature>
<feature type="helix" evidence="6">
    <location>
        <begin position="656"/>
        <end position="659"/>
    </location>
</feature>
<feature type="helix" evidence="6">
    <location>
        <begin position="665"/>
        <end position="675"/>
    </location>
</feature>
<feature type="turn" evidence="6">
    <location>
        <begin position="678"/>
        <end position="681"/>
    </location>
</feature>
<feature type="strand" evidence="7">
    <location>
        <begin position="683"/>
        <end position="685"/>
    </location>
</feature>
<feature type="turn" evidence="6">
    <location>
        <begin position="702"/>
        <end position="705"/>
    </location>
</feature>
<feature type="helix" evidence="6">
    <location>
        <begin position="709"/>
        <end position="721"/>
    </location>
</feature>
<feature type="helix" evidence="6">
    <location>
        <begin position="725"/>
        <end position="738"/>
    </location>
</feature>
<feature type="turn" evidence="6">
    <location>
        <begin position="740"/>
        <end position="743"/>
    </location>
</feature>
<feature type="strand" evidence="6">
    <location>
        <begin position="744"/>
        <end position="746"/>
    </location>
</feature>
<feature type="strand" evidence="6">
    <location>
        <begin position="750"/>
        <end position="752"/>
    </location>
</feature>
<feature type="turn" evidence="6">
    <location>
        <begin position="754"/>
        <end position="756"/>
    </location>
</feature>
<feature type="strand" evidence="6">
    <location>
        <begin position="759"/>
        <end position="761"/>
    </location>
</feature>
<feature type="helix" evidence="6">
    <location>
        <begin position="766"/>
        <end position="778"/>
    </location>
</feature>
<gene>
    <name type="primary">ygjK</name>
    <name type="ordered locus">b3080</name>
    <name type="ordered locus">JW3051</name>
</gene>
<name>YGJK_ECOLI</name>
<organism>
    <name type="scientific">Escherichia coli (strain K12)</name>
    <dbReference type="NCBI Taxonomy" id="83333"/>
    <lineage>
        <taxon>Bacteria</taxon>
        <taxon>Pseudomonadati</taxon>
        <taxon>Pseudomonadota</taxon>
        <taxon>Gammaproteobacteria</taxon>
        <taxon>Enterobacterales</taxon>
        <taxon>Enterobacteriaceae</taxon>
        <taxon>Escherichia</taxon>
    </lineage>
</organism>